<protein>
    <recommendedName>
        <fullName>Plastocyanin</fullName>
    </recommendedName>
</protein>
<gene>
    <name type="primary">PETE</name>
</gene>
<dbReference type="PIR" id="A00298">
    <property type="entry name" value="CUVF"/>
</dbReference>
<dbReference type="SMR" id="P00288"/>
<dbReference type="GO" id="GO:0009543">
    <property type="term" value="C:chloroplast thylakoid lumen"/>
    <property type="evidence" value="ECO:0007669"/>
    <property type="project" value="TreeGrafter"/>
</dbReference>
<dbReference type="GO" id="GO:0009535">
    <property type="term" value="C:chloroplast thylakoid membrane"/>
    <property type="evidence" value="ECO:0007669"/>
    <property type="project" value="UniProtKB-SubCell"/>
</dbReference>
<dbReference type="GO" id="GO:0005507">
    <property type="term" value="F:copper ion binding"/>
    <property type="evidence" value="ECO:0007669"/>
    <property type="project" value="InterPro"/>
</dbReference>
<dbReference type="GO" id="GO:0046028">
    <property type="term" value="F:electron transporter, transferring electrons from cytochrome b6/f complex of photosystem II activity"/>
    <property type="evidence" value="ECO:0007669"/>
    <property type="project" value="TreeGrafter"/>
</dbReference>
<dbReference type="CDD" id="cd04219">
    <property type="entry name" value="Plastocyanin"/>
    <property type="match status" value="1"/>
</dbReference>
<dbReference type="Gene3D" id="2.60.40.420">
    <property type="entry name" value="Cupredoxins - blue copper proteins"/>
    <property type="match status" value="1"/>
</dbReference>
<dbReference type="InterPro" id="IPR000923">
    <property type="entry name" value="BlueCu_1"/>
</dbReference>
<dbReference type="InterPro" id="IPR028871">
    <property type="entry name" value="BlueCu_1_BS"/>
</dbReference>
<dbReference type="InterPro" id="IPR001235">
    <property type="entry name" value="Copper_blue_Plastocyanin"/>
</dbReference>
<dbReference type="InterPro" id="IPR008972">
    <property type="entry name" value="Cupredoxin"/>
</dbReference>
<dbReference type="InterPro" id="IPR002387">
    <property type="entry name" value="Plastocyanin"/>
</dbReference>
<dbReference type="NCBIfam" id="TIGR02656">
    <property type="entry name" value="cyanin_plasto"/>
    <property type="match status" value="1"/>
</dbReference>
<dbReference type="PANTHER" id="PTHR34192">
    <property type="entry name" value="PLASTOCYANIN MAJOR ISOFORM, CHLOROPLASTIC-RELATED"/>
    <property type="match status" value="1"/>
</dbReference>
<dbReference type="PANTHER" id="PTHR34192:SF10">
    <property type="entry name" value="PLASTOCYANIN MAJOR ISOFORM, CHLOROPLASTIC-RELATED"/>
    <property type="match status" value="1"/>
</dbReference>
<dbReference type="Pfam" id="PF00127">
    <property type="entry name" value="Copper-bind"/>
    <property type="match status" value="1"/>
</dbReference>
<dbReference type="PRINTS" id="PR00156">
    <property type="entry name" value="COPPERBLUE"/>
</dbReference>
<dbReference type="PRINTS" id="PR00157">
    <property type="entry name" value="PLASTOCYANIN"/>
</dbReference>
<dbReference type="SUPFAM" id="SSF49503">
    <property type="entry name" value="Cupredoxins"/>
    <property type="match status" value="1"/>
</dbReference>
<dbReference type="PROSITE" id="PS00196">
    <property type="entry name" value="COPPER_BLUE"/>
    <property type="match status" value="1"/>
</dbReference>
<keyword id="KW-0150">Chloroplast</keyword>
<keyword id="KW-0186">Copper</keyword>
<keyword id="KW-0903">Direct protein sequencing</keyword>
<keyword id="KW-0249">Electron transport</keyword>
<keyword id="KW-0472">Membrane</keyword>
<keyword id="KW-0479">Metal-binding</keyword>
<keyword id="KW-0934">Plastid</keyword>
<keyword id="KW-0793">Thylakoid</keyword>
<keyword id="KW-0813">Transport</keyword>
<evidence type="ECO:0000250" key="1">
    <source>
        <dbReference type="UniProtKB" id="P18068"/>
    </source>
</evidence>
<evidence type="ECO:0000269" key="2">
    <source>
    </source>
</evidence>
<evidence type="ECO:0000305" key="3"/>
<reference key="1">
    <citation type="journal article" date="1974" name="Biochem. J.">
        <title>The amino acid sequence of plastocyanin from Vicia faba L. (broad bean).</title>
        <authorList>
            <person name="Ramshaw J.A.M."/>
            <person name="Scawen M.D."/>
            <person name="Boulter D."/>
        </authorList>
    </citation>
    <scope>PROTEIN SEQUENCE</scope>
    <scope>SUBCELLULAR LOCATION</scope>
</reference>
<comment type="function">
    <text evidence="1">Participates in electron transfer between P700 and the cytochrome b6-f complex in photosystem I.</text>
</comment>
<comment type="cofactor">
    <cofactor evidence="1">
        <name>Cu(2+)</name>
        <dbReference type="ChEBI" id="CHEBI:29036"/>
    </cofactor>
</comment>
<comment type="subcellular location">
    <subcellularLocation>
        <location evidence="2">Plastid</location>
        <location evidence="2">Chloroplast thylakoid membrane</location>
        <topology evidence="1">Peripheral membrane protein</topology>
        <orientation evidence="1">Lumenal side</orientation>
    </subcellularLocation>
    <text>Loosely bound to the inner thylakoid membrane surface in chloroplasts (By similarity).</text>
</comment>
<comment type="similarity">
    <text evidence="3">Belongs to the plastocyanin family.</text>
</comment>
<accession>P00288</accession>
<proteinExistence type="evidence at protein level"/>
<feature type="chain" id="PRO_0000085580" description="Plastocyanin">
    <location>
        <begin position="1"/>
        <end position="99"/>
    </location>
</feature>
<feature type="domain" description="Plastocyanin-like">
    <location>
        <begin position="1"/>
        <end position="99"/>
    </location>
</feature>
<feature type="binding site" evidence="1">
    <location>
        <position position="37"/>
    </location>
    <ligand>
        <name>Cu cation</name>
        <dbReference type="ChEBI" id="CHEBI:23378"/>
    </ligand>
</feature>
<feature type="binding site" evidence="1">
    <location>
        <position position="84"/>
    </location>
    <ligand>
        <name>Cu cation</name>
        <dbReference type="ChEBI" id="CHEBI:23378"/>
    </ligand>
</feature>
<feature type="binding site" evidence="1">
    <location>
        <position position="87"/>
    </location>
    <ligand>
        <name>Cu cation</name>
        <dbReference type="ChEBI" id="CHEBI:23378"/>
    </ligand>
</feature>
<feature type="binding site" evidence="1">
    <location>
        <position position="92"/>
    </location>
    <ligand>
        <name>Cu cation</name>
        <dbReference type="ChEBI" id="CHEBI:23378"/>
    </ligand>
</feature>
<name>PLAS_VICFA</name>
<organism>
    <name type="scientific">Vicia faba</name>
    <name type="common">Broad bean</name>
    <name type="synonym">Faba vulgaris</name>
    <dbReference type="NCBI Taxonomy" id="3906"/>
    <lineage>
        <taxon>Eukaryota</taxon>
        <taxon>Viridiplantae</taxon>
        <taxon>Streptophyta</taxon>
        <taxon>Embryophyta</taxon>
        <taxon>Tracheophyta</taxon>
        <taxon>Spermatophyta</taxon>
        <taxon>Magnoliopsida</taxon>
        <taxon>eudicotyledons</taxon>
        <taxon>Gunneridae</taxon>
        <taxon>Pentapetalae</taxon>
        <taxon>rosids</taxon>
        <taxon>fabids</taxon>
        <taxon>Fabales</taxon>
        <taxon>Fabaceae</taxon>
        <taxon>Papilionoideae</taxon>
        <taxon>50 kb inversion clade</taxon>
        <taxon>NPAAA clade</taxon>
        <taxon>Hologalegina</taxon>
        <taxon>IRL clade</taxon>
        <taxon>Fabeae</taxon>
        <taxon>Vicia</taxon>
    </lineage>
</organism>
<sequence length="99" mass="10394">VEVLLGASDGGLAFVPNSFEVSAGDTIVFKNNAGFPHNVVFDEDEIPSGVDAAKISMPEEDLLNAPGETYSVKLDAKGTYKFYCSPHQGAGMVGQVTVN</sequence>